<feature type="chain" id="PRO_0000129538" description="Large ribosomal subunit protein uL2">
    <location>
        <begin position="1"/>
        <end position="277"/>
    </location>
</feature>
<feature type="region of interest" description="Disordered" evidence="2">
    <location>
        <begin position="222"/>
        <end position="277"/>
    </location>
</feature>
<dbReference type="EMBL" id="AE014291">
    <property type="protein sequence ID" value="AAN30149.1"/>
    <property type="molecule type" value="Genomic_DNA"/>
</dbReference>
<dbReference type="EMBL" id="CP002997">
    <property type="protein sequence ID" value="AEM18567.1"/>
    <property type="molecule type" value="Genomic_DNA"/>
</dbReference>
<dbReference type="RefSeq" id="WP_002964359.1">
    <property type="nucleotide sequence ID" value="NZ_KN046804.1"/>
</dbReference>
<dbReference type="SMR" id="Q8G079"/>
<dbReference type="GeneID" id="97533527"/>
<dbReference type="KEGG" id="bms:BR1230"/>
<dbReference type="KEGG" id="bsi:BS1330_I1226"/>
<dbReference type="PATRIC" id="fig|204722.21.peg.2246"/>
<dbReference type="HOGENOM" id="CLU_036235_2_1_5"/>
<dbReference type="PhylomeDB" id="Q8G079"/>
<dbReference type="Proteomes" id="UP000007104">
    <property type="component" value="Chromosome I"/>
</dbReference>
<dbReference type="GO" id="GO:0015934">
    <property type="term" value="C:large ribosomal subunit"/>
    <property type="evidence" value="ECO:0007669"/>
    <property type="project" value="InterPro"/>
</dbReference>
<dbReference type="GO" id="GO:0019843">
    <property type="term" value="F:rRNA binding"/>
    <property type="evidence" value="ECO:0007669"/>
    <property type="project" value="UniProtKB-UniRule"/>
</dbReference>
<dbReference type="GO" id="GO:0003735">
    <property type="term" value="F:structural constituent of ribosome"/>
    <property type="evidence" value="ECO:0007669"/>
    <property type="project" value="InterPro"/>
</dbReference>
<dbReference type="GO" id="GO:0016740">
    <property type="term" value="F:transferase activity"/>
    <property type="evidence" value="ECO:0007669"/>
    <property type="project" value="InterPro"/>
</dbReference>
<dbReference type="GO" id="GO:0002181">
    <property type="term" value="P:cytoplasmic translation"/>
    <property type="evidence" value="ECO:0007669"/>
    <property type="project" value="TreeGrafter"/>
</dbReference>
<dbReference type="FunFam" id="2.30.30.30:FF:000055">
    <property type="entry name" value="50S ribosomal protein L2"/>
    <property type="match status" value="1"/>
</dbReference>
<dbReference type="FunFam" id="2.40.50.140:FF:000003">
    <property type="entry name" value="50S ribosomal protein L2"/>
    <property type="match status" value="1"/>
</dbReference>
<dbReference type="FunFam" id="4.10.950.10:FF:000001">
    <property type="entry name" value="50S ribosomal protein L2"/>
    <property type="match status" value="1"/>
</dbReference>
<dbReference type="Gene3D" id="2.30.30.30">
    <property type="match status" value="1"/>
</dbReference>
<dbReference type="Gene3D" id="2.40.50.140">
    <property type="entry name" value="Nucleic acid-binding proteins"/>
    <property type="match status" value="1"/>
</dbReference>
<dbReference type="Gene3D" id="4.10.950.10">
    <property type="entry name" value="Ribosomal protein L2, domain 3"/>
    <property type="match status" value="1"/>
</dbReference>
<dbReference type="HAMAP" id="MF_01320_B">
    <property type="entry name" value="Ribosomal_uL2_B"/>
    <property type="match status" value="1"/>
</dbReference>
<dbReference type="InterPro" id="IPR012340">
    <property type="entry name" value="NA-bd_OB-fold"/>
</dbReference>
<dbReference type="InterPro" id="IPR014722">
    <property type="entry name" value="Rib_uL2_dom2"/>
</dbReference>
<dbReference type="InterPro" id="IPR002171">
    <property type="entry name" value="Ribosomal_uL2"/>
</dbReference>
<dbReference type="InterPro" id="IPR005880">
    <property type="entry name" value="Ribosomal_uL2_bac/org-type"/>
</dbReference>
<dbReference type="InterPro" id="IPR022669">
    <property type="entry name" value="Ribosomal_uL2_C"/>
</dbReference>
<dbReference type="InterPro" id="IPR022671">
    <property type="entry name" value="Ribosomal_uL2_CS"/>
</dbReference>
<dbReference type="InterPro" id="IPR014726">
    <property type="entry name" value="Ribosomal_uL2_dom3"/>
</dbReference>
<dbReference type="InterPro" id="IPR022666">
    <property type="entry name" value="Ribosomal_uL2_RNA-bd_dom"/>
</dbReference>
<dbReference type="InterPro" id="IPR008991">
    <property type="entry name" value="Translation_prot_SH3-like_sf"/>
</dbReference>
<dbReference type="NCBIfam" id="TIGR01171">
    <property type="entry name" value="rplB_bact"/>
    <property type="match status" value="1"/>
</dbReference>
<dbReference type="PANTHER" id="PTHR13691:SF5">
    <property type="entry name" value="LARGE RIBOSOMAL SUBUNIT PROTEIN UL2M"/>
    <property type="match status" value="1"/>
</dbReference>
<dbReference type="PANTHER" id="PTHR13691">
    <property type="entry name" value="RIBOSOMAL PROTEIN L2"/>
    <property type="match status" value="1"/>
</dbReference>
<dbReference type="Pfam" id="PF00181">
    <property type="entry name" value="Ribosomal_L2"/>
    <property type="match status" value="1"/>
</dbReference>
<dbReference type="Pfam" id="PF03947">
    <property type="entry name" value="Ribosomal_L2_C"/>
    <property type="match status" value="1"/>
</dbReference>
<dbReference type="PIRSF" id="PIRSF002158">
    <property type="entry name" value="Ribosomal_L2"/>
    <property type="match status" value="1"/>
</dbReference>
<dbReference type="SMART" id="SM01383">
    <property type="entry name" value="Ribosomal_L2"/>
    <property type="match status" value="1"/>
</dbReference>
<dbReference type="SMART" id="SM01382">
    <property type="entry name" value="Ribosomal_L2_C"/>
    <property type="match status" value="1"/>
</dbReference>
<dbReference type="SUPFAM" id="SSF50249">
    <property type="entry name" value="Nucleic acid-binding proteins"/>
    <property type="match status" value="1"/>
</dbReference>
<dbReference type="SUPFAM" id="SSF50104">
    <property type="entry name" value="Translation proteins SH3-like domain"/>
    <property type="match status" value="1"/>
</dbReference>
<dbReference type="PROSITE" id="PS00467">
    <property type="entry name" value="RIBOSOMAL_L2"/>
    <property type="match status" value="1"/>
</dbReference>
<name>RL2_BRUSU</name>
<sequence length="277" mass="30168">MALKHFNPITPGQRQLVIVDRSELYKGKPVKSLTEGLSKKGGRNNTGRITVRFQGGGHKRSYRFIDFKRRKLDVVGTVERLEYDPNRTAFIALIRYTDGELAYILAPQRLAVGDQVVAGNSVDVKPGNAMPLSSMPVGTIIHNVELKPGKGGQIARSAGTYAQLVGRDQGMAILRLNSGEQRLVSGACFASVGAVSNPDHGNINDGKAGRSVWRGKRPHVRGVAMNPVDHPHGGGEGRTSGGRHPVTPWGKPTKGKKTRSNKATDKFIMRSRHQRKK</sequence>
<comment type="function">
    <text evidence="1">One of the primary rRNA binding proteins. Required for association of the 30S and 50S subunits to form the 70S ribosome, for tRNA binding and peptide bond formation. It has been suggested to have peptidyltransferase activity; this is somewhat controversial. Makes several contacts with the 16S rRNA in the 70S ribosome.</text>
</comment>
<comment type="subunit">
    <text evidence="1">Part of the 50S ribosomal subunit. Forms a bridge to the 30S subunit in the 70S ribosome.</text>
</comment>
<comment type="similarity">
    <text evidence="1">Belongs to the universal ribosomal protein uL2 family.</text>
</comment>
<accession>Q8G079</accession>
<accession>G0KAF1</accession>
<keyword id="KW-0687">Ribonucleoprotein</keyword>
<keyword id="KW-0689">Ribosomal protein</keyword>
<keyword id="KW-0694">RNA-binding</keyword>
<keyword id="KW-0699">rRNA-binding</keyword>
<reference key="1">
    <citation type="journal article" date="2002" name="Proc. Natl. Acad. Sci. U.S.A.">
        <title>The Brucella suis genome reveals fundamental similarities between animal and plant pathogens and symbionts.</title>
        <authorList>
            <person name="Paulsen I.T."/>
            <person name="Seshadri R."/>
            <person name="Nelson K.E."/>
            <person name="Eisen J.A."/>
            <person name="Heidelberg J.F."/>
            <person name="Read T.D."/>
            <person name="Dodson R.J."/>
            <person name="Umayam L.A."/>
            <person name="Brinkac L.M."/>
            <person name="Beanan M.J."/>
            <person name="Daugherty S.C."/>
            <person name="DeBoy R.T."/>
            <person name="Durkin A.S."/>
            <person name="Kolonay J.F."/>
            <person name="Madupu R."/>
            <person name="Nelson W.C."/>
            <person name="Ayodeji B."/>
            <person name="Kraul M."/>
            <person name="Shetty J."/>
            <person name="Malek J.A."/>
            <person name="Van Aken S.E."/>
            <person name="Riedmuller S."/>
            <person name="Tettelin H."/>
            <person name="Gill S.R."/>
            <person name="White O."/>
            <person name="Salzberg S.L."/>
            <person name="Hoover D.L."/>
            <person name="Lindler L.E."/>
            <person name="Halling S.M."/>
            <person name="Boyle S.M."/>
            <person name="Fraser C.M."/>
        </authorList>
    </citation>
    <scope>NUCLEOTIDE SEQUENCE [LARGE SCALE GENOMIC DNA]</scope>
    <source>
        <strain>1330</strain>
    </source>
</reference>
<reference key="2">
    <citation type="journal article" date="2011" name="J. Bacteriol.">
        <title>Revised genome sequence of Brucella suis 1330.</title>
        <authorList>
            <person name="Tae H."/>
            <person name="Shallom S."/>
            <person name="Settlage R."/>
            <person name="Preston D."/>
            <person name="Adams L.G."/>
            <person name="Garner H.R."/>
        </authorList>
    </citation>
    <scope>NUCLEOTIDE SEQUENCE [LARGE SCALE GENOMIC DNA]</scope>
    <source>
        <strain>1330</strain>
    </source>
</reference>
<organism>
    <name type="scientific">Brucella suis biovar 1 (strain 1330)</name>
    <dbReference type="NCBI Taxonomy" id="204722"/>
    <lineage>
        <taxon>Bacteria</taxon>
        <taxon>Pseudomonadati</taxon>
        <taxon>Pseudomonadota</taxon>
        <taxon>Alphaproteobacteria</taxon>
        <taxon>Hyphomicrobiales</taxon>
        <taxon>Brucellaceae</taxon>
        <taxon>Brucella/Ochrobactrum group</taxon>
        <taxon>Brucella</taxon>
    </lineage>
</organism>
<gene>
    <name evidence="1" type="primary">rplB</name>
    <name type="ordered locus">BR1230</name>
    <name type="ordered locus">BS1330_I1226</name>
</gene>
<protein>
    <recommendedName>
        <fullName evidence="1">Large ribosomal subunit protein uL2</fullName>
    </recommendedName>
    <alternativeName>
        <fullName evidence="3">50S ribosomal protein L2</fullName>
    </alternativeName>
</protein>
<evidence type="ECO:0000255" key="1">
    <source>
        <dbReference type="HAMAP-Rule" id="MF_01320"/>
    </source>
</evidence>
<evidence type="ECO:0000256" key="2">
    <source>
        <dbReference type="SAM" id="MobiDB-lite"/>
    </source>
</evidence>
<evidence type="ECO:0000305" key="3"/>
<proteinExistence type="inferred from homology"/>